<reference key="1">
    <citation type="submission" date="2008-10" db="EMBL/GenBank/DDBJ databases">
        <title>Genome sequence of Bacillus anthracis str. CDC 684.</title>
        <authorList>
            <person name="Dodson R.J."/>
            <person name="Munk A.C."/>
            <person name="Brettin T."/>
            <person name="Bruce D."/>
            <person name="Detter C."/>
            <person name="Tapia R."/>
            <person name="Han C."/>
            <person name="Sutton G."/>
            <person name="Sims D."/>
        </authorList>
    </citation>
    <scope>NUCLEOTIDE SEQUENCE [LARGE SCALE GENOMIC DNA]</scope>
    <source>
        <strain>CDC 684 / NRRL 3495</strain>
    </source>
</reference>
<accession>C3LAQ3</accession>
<organism>
    <name type="scientific">Bacillus anthracis (strain CDC 684 / NRRL 3495)</name>
    <dbReference type="NCBI Taxonomy" id="568206"/>
    <lineage>
        <taxon>Bacteria</taxon>
        <taxon>Bacillati</taxon>
        <taxon>Bacillota</taxon>
        <taxon>Bacilli</taxon>
        <taxon>Bacillales</taxon>
        <taxon>Bacillaceae</taxon>
        <taxon>Bacillus</taxon>
        <taxon>Bacillus cereus group</taxon>
    </lineage>
</organism>
<evidence type="ECO:0000255" key="1">
    <source>
        <dbReference type="HAMAP-Rule" id="MF_02103"/>
    </source>
</evidence>
<name>LUTB_BACAC</name>
<dbReference type="EMBL" id="CP001215">
    <property type="protein sequence ID" value="ACP16082.1"/>
    <property type="molecule type" value="Genomic_DNA"/>
</dbReference>
<dbReference type="RefSeq" id="WP_000061914.1">
    <property type="nucleotide sequence ID" value="NC_012581.1"/>
</dbReference>
<dbReference type="KEGG" id="bah:BAMEG_3281"/>
<dbReference type="HOGENOM" id="CLU_027059_2_0_9"/>
<dbReference type="GO" id="GO:0051539">
    <property type="term" value="F:4 iron, 4 sulfur cluster binding"/>
    <property type="evidence" value="ECO:0007669"/>
    <property type="project" value="UniProtKB-KW"/>
</dbReference>
<dbReference type="GO" id="GO:0046872">
    <property type="term" value="F:metal ion binding"/>
    <property type="evidence" value="ECO:0007669"/>
    <property type="project" value="UniProtKB-KW"/>
</dbReference>
<dbReference type="GO" id="GO:0006089">
    <property type="term" value="P:lactate metabolic process"/>
    <property type="evidence" value="ECO:0007669"/>
    <property type="project" value="UniProtKB-UniRule"/>
</dbReference>
<dbReference type="Gene3D" id="1.10.1060.10">
    <property type="entry name" value="Alpha-helical ferredoxin"/>
    <property type="match status" value="1"/>
</dbReference>
<dbReference type="Gene3D" id="3.40.50.10420">
    <property type="entry name" value="NagB/RpiA/CoA transferase-like"/>
    <property type="match status" value="1"/>
</dbReference>
<dbReference type="HAMAP" id="MF_02103">
    <property type="entry name" value="LutB"/>
    <property type="match status" value="1"/>
</dbReference>
<dbReference type="InterPro" id="IPR017896">
    <property type="entry name" value="4Fe4S_Fe-S-bd"/>
</dbReference>
<dbReference type="InterPro" id="IPR017900">
    <property type="entry name" value="4Fe4S_Fe_S_CS"/>
</dbReference>
<dbReference type="InterPro" id="IPR024185">
    <property type="entry name" value="FTHF_cligase-like_sf"/>
</dbReference>
<dbReference type="InterPro" id="IPR009051">
    <property type="entry name" value="Helical_ferredxn"/>
</dbReference>
<dbReference type="InterPro" id="IPR003741">
    <property type="entry name" value="LUD_dom"/>
</dbReference>
<dbReference type="InterPro" id="IPR022825">
    <property type="entry name" value="LutB"/>
</dbReference>
<dbReference type="InterPro" id="IPR004452">
    <property type="entry name" value="LutB/LldF"/>
</dbReference>
<dbReference type="InterPro" id="IPR024569">
    <property type="entry name" value="LutB_C"/>
</dbReference>
<dbReference type="InterPro" id="IPR037171">
    <property type="entry name" value="NagB/RpiA_transferase-like"/>
</dbReference>
<dbReference type="NCBIfam" id="TIGR00273">
    <property type="entry name" value="LutB/LldF family L-lactate oxidation iron-sulfur protein"/>
    <property type="match status" value="1"/>
</dbReference>
<dbReference type="PANTHER" id="PTHR47153">
    <property type="entry name" value="LACTATE UTILIZATION PROTEIN B"/>
    <property type="match status" value="1"/>
</dbReference>
<dbReference type="PANTHER" id="PTHR47153:SF2">
    <property type="entry name" value="LACTATE UTILIZATION PROTEIN B"/>
    <property type="match status" value="1"/>
</dbReference>
<dbReference type="Pfam" id="PF13183">
    <property type="entry name" value="Fer4_8"/>
    <property type="match status" value="1"/>
</dbReference>
<dbReference type="Pfam" id="PF02589">
    <property type="entry name" value="LUD_dom"/>
    <property type="match status" value="1"/>
</dbReference>
<dbReference type="Pfam" id="PF11870">
    <property type="entry name" value="LutB_C"/>
    <property type="match status" value="1"/>
</dbReference>
<dbReference type="SUPFAM" id="SSF46548">
    <property type="entry name" value="alpha-helical ferredoxin"/>
    <property type="match status" value="1"/>
</dbReference>
<dbReference type="SUPFAM" id="SSF100950">
    <property type="entry name" value="NagB/RpiA/CoA transferase-like"/>
    <property type="match status" value="1"/>
</dbReference>
<dbReference type="PROSITE" id="PS00198">
    <property type="entry name" value="4FE4S_FER_1"/>
    <property type="match status" value="1"/>
</dbReference>
<protein>
    <recommendedName>
        <fullName evidence="1">Lactate utilization protein B</fullName>
    </recommendedName>
</protein>
<comment type="function">
    <text evidence="1">Is involved in L-lactate degradation and allows cells to grow with lactate as the sole carbon source. Has probably a role as an electron transporter during oxidation of L-lactate.</text>
</comment>
<comment type="similarity">
    <text evidence="1">Belongs to the LutB/YkgF family.</text>
</comment>
<keyword id="KW-0004">4Fe-4S</keyword>
<keyword id="KW-0249">Electron transport</keyword>
<keyword id="KW-0408">Iron</keyword>
<keyword id="KW-0411">Iron-sulfur</keyword>
<keyword id="KW-0479">Metal-binding</keyword>
<keyword id="KW-0677">Repeat</keyword>
<keyword id="KW-0813">Transport</keyword>
<sequence length="473" mass="52669">MSMKISEKKFNDRVGDGIQDSFMRGAVSSAQTRLYTNRLKAADELGNWEEWRELGEEIRQHTLENLDYYLMQLSENVSKRGGHVYFAKTKEEAAKYIQDVAKKKQAKKVVKSKSMVTEEISMNHALEEIGCEVLESDLGEYILQVDNDPPSHIIAPALHKNRTQIRDVFKEKLGYENSDDPYEMTKFVRKQLREKFMDAEIGVTGCNFAVANTGSLCLVTNEGNADLVMSIPKTQIAVMGMERMVPTMEELDVLVGLLCRSAVGQKLTSYVTVAGPIQEEEVDGPEEFHLVVVDNGRSQILGSEFRQVLQCIRCAACVNVCPVYRHVGGHSYGSIYSGPIGAVLTPLLGGYDDYKELPYASSLCGACTEACPVKIPLHDLLLKHRQVIVEQEGRAPLAEKLAMKMFSMGASSAALYKMGSKMAPAAMSPFTSGNRVSKGVGPLKNWTDIREFPAPSKERFRDWYKDHKKGGDK</sequence>
<feature type="chain" id="PRO_0000383960" description="Lactate utilization protein B">
    <location>
        <begin position="1"/>
        <end position="473"/>
    </location>
</feature>
<feature type="domain" description="4Fe-4S ferredoxin-type 1" evidence="1">
    <location>
        <begin position="302"/>
        <end position="332"/>
    </location>
</feature>
<feature type="domain" description="4Fe-4S ferredoxin-type 2" evidence="1">
    <location>
        <begin position="351"/>
        <end position="380"/>
    </location>
</feature>
<feature type="binding site" evidence="1">
    <location>
        <position position="311"/>
    </location>
    <ligand>
        <name>[4Fe-4S] cluster</name>
        <dbReference type="ChEBI" id="CHEBI:49883"/>
        <label>1</label>
    </ligand>
</feature>
<feature type="binding site" evidence="1">
    <location>
        <position position="314"/>
    </location>
    <ligand>
        <name>[4Fe-4S] cluster</name>
        <dbReference type="ChEBI" id="CHEBI:49883"/>
        <label>1</label>
    </ligand>
</feature>
<feature type="binding site" evidence="1">
    <location>
        <position position="317"/>
    </location>
    <ligand>
        <name>[4Fe-4S] cluster</name>
        <dbReference type="ChEBI" id="CHEBI:49883"/>
        <label>1</label>
    </ligand>
</feature>
<feature type="binding site" evidence="1">
    <location>
        <position position="321"/>
    </location>
    <ligand>
        <name>[4Fe-4S] cluster</name>
        <dbReference type="ChEBI" id="CHEBI:49883"/>
        <label>2</label>
    </ligand>
</feature>
<feature type="binding site" evidence="1">
    <location>
        <position position="364"/>
    </location>
    <ligand>
        <name>[4Fe-4S] cluster</name>
        <dbReference type="ChEBI" id="CHEBI:49883"/>
        <label>2</label>
    </ligand>
</feature>
<feature type="binding site" evidence="1">
    <location>
        <position position="367"/>
    </location>
    <ligand>
        <name>[4Fe-4S] cluster</name>
        <dbReference type="ChEBI" id="CHEBI:49883"/>
        <label>2</label>
    </ligand>
</feature>
<feature type="binding site" evidence="1">
    <location>
        <position position="371"/>
    </location>
    <ligand>
        <name>[4Fe-4S] cluster</name>
        <dbReference type="ChEBI" id="CHEBI:49883"/>
        <label>1</label>
    </ligand>
</feature>
<gene>
    <name evidence="1" type="primary">lutB</name>
    <name type="ordered locus">BAMEG_3281</name>
</gene>
<proteinExistence type="inferred from homology"/>